<protein>
    <recommendedName>
        <fullName evidence="1">Large ribosomal subunit protein uL2</fullName>
    </recommendedName>
    <alternativeName>
        <fullName evidence="3">50S ribosomal protein L2</fullName>
    </alternativeName>
</protein>
<dbReference type="EMBL" id="AY198133">
    <property type="protein sequence ID" value="AAP58895.1"/>
    <property type="molecule type" value="Genomic_DNA"/>
</dbReference>
<dbReference type="SMR" id="P60404"/>
<dbReference type="GO" id="GO:0015934">
    <property type="term" value="C:large ribosomal subunit"/>
    <property type="evidence" value="ECO:0007669"/>
    <property type="project" value="InterPro"/>
</dbReference>
<dbReference type="GO" id="GO:0019843">
    <property type="term" value="F:rRNA binding"/>
    <property type="evidence" value="ECO:0007669"/>
    <property type="project" value="UniProtKB-UniRule"/>
</dbReference>
<dbReference type="GO" id="GO:0003735">
    <property type="term" value="F:structural constituent of ribosome"/>
    <property type="evidence" value="ECO:0007669"/>
    <property type="project" value="InterPro"/>
</dbReference>
<dbReference type="GO" id="GO:0016740">
    <property type="term" value="F:transferase activity"/>
    <property type="evidence" value="ECO:0007669"/>
    <property type="project" value="InterPro"/>
</dbReference>
<dbReference type="GO" id="GO:0002181">
    <property type="term" value="P:cytoplasmic translation"/>
    <property type="evidence" value="ECO:0007669"/>
    <property type="project" value="TreeGrafter"/>
</dbReference>
<dbReference type="FunFam" id="2.30.30.30:FF:000001">
    <property type="entry name" value="50S ribosomal protein L2"/>
    <property type="match status" value="1"/>
</dbReference>
<dbReference type="FunFam" id="2.40.50.140:FF:000003">
    <property type="entry name" value="50S ribosomal protein L2"/>
    <property type="match status" value="1"/>
</dbReference>
<dbReference type="FunFam" id="4.10.950.10:FF:000001">
    <property type="entry name" value="50S ribosomal protein L2"/>
    <property type="match status" value="1"/>
</dbReference>
<dbReference type="Gene3D" id="2.30.30.30">
    <property type="match status" value="1"/>
</dbReference>
<dbReference type="Gene3D" id="2.40.50.140">
    <property type="entry name" value="Nucleic acid-binding proteins"/>
    <property type="match status" value="1"/>
</dbReference>
<dbReference type="Gene3D" id="4.10.950.10">
    <property type="entry name" value="Ribosomal protein L2, domain 3"/>
    <property type="match status" value="1"/>
</dbReference>
<dbReference type="HAMAP" id="MF_01320_B">
    <property type="entry name" value="Ribosomal_uL2_B"/>
    <property type="match status" value="1"/>
</dbReference>
<dbReference type="InterPro" id="IPR012340">
    <property type="entry name" value="NA-bd_OB-fold"/>
</dbReference>
<dbReference type="InterPro" id="IPR014722">
    <property type="entry name" value="Rib_uL2_dom2"/>
</dbReference>
<dbReference type="InterPro" id="IPR002171">
    <property type="entry name" value="Ribosomal_uL2"/>
</dbReference>
<dbReference type="InterPro" id="IPR005880">
    <property type="entry name" value="Ribosomal_uL2_bac/org-type"/>
</dbReference>
<dbReference type="InterPro" id="IPR022669">
    <property type="entry name" value="Ribosomal_uL2_C"/>
</dbReference>
<dbReference type="InterPro" id="IPR022671">
    <property type="entry name" value="Ribosomal_uL2_CS"/>
</dbReference>
<dbReference type="InterPro" id="IPR014726">
    <property type="entry name" value="Ribosomal_uL2_dom3"/>
</dbReference>
<dbReference type="InterPro" id="IPR022666">
    <property type="entry name" value="Ribosomal_uL2_RNA-bd_dom"/>
</dbReference>
<dbReference type="InterPro" id="IPR008991">
    <property type="entry name" value="Translation_prot_SH3-like_sf"/>
</dbReference>
<dbReference type="NCBIfam" id="TIGR01171">
    <property type="entry name" value="rplB_bact"/>
    <property type="match status" value="1"/>
</dbReference>
<dbReference type="PANTHER" id="PTHR13691:SF5">
    <property type="entry name" value="LARGE RIBOSOMAL SUBUNIT PROTEIN UL2M"/>
    <property type="match status" value="1"/>
</dbReference>
<dbReference type="PANTHER" id="PTHR13691">
    <property type="entry name" value="RIBOSOMAL PROTEIN L2"/>
    <property type="match status" value="1"/>
</dbReference>
<dbReference type="Pfam" id="PF00181">
    <property type="entry name" value="Ribosomal_L2"/>
    <property type="match status" value="1"/>
</dbReference>
<dbReference type="Pfam" id="PF03947">
    <property type="entry name" value="Ribosomal_L2_C"/>
    <property type="match status" value="1"/>
</dbReference>
<dbReference type="PIRSF" id="PIRSF002158">
    <property type="entry name" value="Ribosomal_L2"/>
    <property type="match status" value="1"/>
</dbReference>
<dbReference type="SMART" id="SM01383">
    <property type="entry name" value="Ribosomal_L2"/>
    <property type="match status" value="1"/>
</dbReference>
<dbReference type="SMART" id="SM01382">
    <property type="entry name" value="Ribosomal_L2_C"/>
    <property type="match status" value="1"/>
</dbReference>
<dbReference type="SUPFAM" id="SSF50249">
    <property type="entry name" value="Nucleic acid-binding proteins"/>
    <property type="match status" value="1"/>
</dbReference>
<dbReference type="SUPFAM" id="SSF50104">
    <property type="entry name" value="Translation proteins SH3-like domain"/>
    <property type="match status" value="1"/>
</dbReference>
<dbReference type="PROSITE" id="PS00467">
    <property type="entry name" value="RIBOSOMAL_L2"/>
    <property type="match status" value="1"/>
</dbReference>
<feature type="chain" id="PRO_0000129613" description="Large ribosomal subunit protein uL2">
    <location>
        <begin position="1"/>
        <end position="278"/>
    </location>
</feature>
<feature type="region of interest" description="Disordered" evidence="2">
    <location>
        <begin position="223"/>
        <end position="278"/>
    </location>
</feature>
<feature type="compositionally biased region" description="Basic residues" evidence="2">
    <location>
        <begin position="261"/>
        <end position="278"/>
    </location>
</feature>
<sequence length="278" mass="30847">MPIKSFKPVTPSRRNMTSLDYSVLTTDRPEKSLIKTRKKHAGRNNQGVITTRHKGGGHKVKYRIIDFKRNKDNIIGKIATIEYDPNRNAFICLVNYVDGEKRYILAPKTIKVGMQIVSAEKTDIKVGNCMKLKNIPEGTVLHNLELRPGKGGQLARSAGSSVQFLGKDEDGKYVTIRLTSGEVRKVLGECRATVGEVGNEDYALVNWGKAGRNRWRGIRPTVRGSAMNPNDHPHGGGEGKAPVGRKAPMTPWGKKALGVKTRNKKKASTKLIVRRRTK</sequence>
<proteinExistence type="inferred from homology"/>
<accession>P60404</accession>
<gene>
    <name evidence="1" type="primary">rplB</name>
</gene>
<evidence type="ECO:0000255" key="1">
    <source>
        <dbReference type="HAMAP-Rule" id="MF_01320"/>
    </source>
</evidence>
<evidence type="ECO:0000256" key="2">
    <source>
        <dbReference type="SAM" id="MobiDB-lite"/>
    </source>
</evidence>
<evidence type="ECO:0000305" key="3"/>
<name>RL2_SPIKU</name>
<reference key="1">
    <citation type="journal article" date="2003" name="Mol. Genet. Genomics">
        <title>Gene content and organization of an 85-kb DNA segment from the genome of the phytopathogenic mollicute Spiroplasma kunkelii.</title>
        <authorList>
            <person name="Zhao Y."/>
            <person name="Hammond R.W."/>
            <person name="Jomantiene R."/>
            <person name="Dally E.L."/>
            <person name="Lee I.-M."/>
            <person name="Jia H."/>
            <person name="Wu H."/>
            <person name="Lin S."/>
            <person name="Zhang P."/>
            <person name="Kenton S."/>
            <person name="Najar F.Z."/>
            <person name="Hua A."/>
            <person name="Roe B.A."/>
            <person name="Fletcher J."/>
            <person name="Davis R.E."/>
        </authorList>
    </citation>
    <scope>NUCLEOTIDE SEQUENCE [GENOMIC DNA]</scope>
    <source>
        <strain>CR2-3x</strain>
    </source>
</reference>
<organism>
    <name type="scientific">Spiroplasma kunkelii</name>
    <dbReference type="NCBI Taxonomy" id="47834"/>
    <lineage>
        <taxon>Bacteria</taxon>
        <taxon>Bacillati</taxon>
        <taxon>Mycoplasmatota</taxon>
        <taxon>Mollicutes</taxon>
        <taxon>Entomoplasmatales</taxon>
        <taxon>Spiroplasmataceae</taxon>
        <taxon>Spiroplasma</taxon>
    </lineage>
</organism>
<keyword id="KW-0687">Ribonucleoprotein</keyword>
<keyword id="KW-0689">Ribosomal protein</keyword>
<keyword id="KW-0694">RNA-binding</keyword>
<keyword id="KW-0699">rRNA-binding</keyword>
<comment type="function">
    <text evidence="1">One of the primary rRNA binding proteins. Required for association of the 30S and 50S subunits to form the 70S ribosome, for tRNA binding and peptide bond formation. It has been suggested to have peptidyltransferase activity; this is somewhat controversial. Makes several contacts with the 16S rRNA in the 70S ribosome.</text>
</comment>
<comment type="subunit">
    <text evidence="1">Part of the 50S ribosomal subunit. Forms a bridge to the 30S subunit in the 70S ribosome.</text>
</comment>
<comment type="similarity">
    <text evidence="1">Belongs to the universal ribosomal protein uL2 family.</text>
</comment>